<comment type="function">
    <text evidence="1 4">Plays a role in neurite development, may be through the activation of the GTPase RAC1. Plays a role in the control of eye movement and gaze stability.</text>
</comment>
<comment type="subcellular location">
    <subcellularLocation>
        <location evidence="4">Cell projection</location>
        <location evidence="4">Neuron projection</location>
    </subcellularLocation>
    <subcellularLocation>
        <location evidence="4">Cell projection</location>
        <location evidence="4">Growth cone</location>
    </subcellularLocation>
    <text evidence="4">In undifferentiated neurons, located in the actin-rich regions of the cell body. In differentiated neurons, located in the actin-rich regions of the cell body and primary neurite processes but is almost absent from secondary extensions arising from the primary neurite. Also found at the actin-rich distal end of growth cones.</text>
</comment>
<comment type="tissue specificity">
    <text evidence="4">In the developing cerebral cortex, strong expression is observed in the ventricular and intermediate zones at 13 and 17 dpc. At 17 dpc and P0, expression appears to be restricted to the cortical plate. In neonates, highly expressed in cortex, hippocampus, cerebellum, olfactory bulb and eye with little or no expression in liver, kidney, skeletal muscle or heart muscle (at protein level).</text>
</comment>
<comment type="induction">
    <text evidence="4">Up-regulated during retinoic acid-induced differentiation of neuroblastoma cells.</text>
</comment>
<comment type="sequence caution" evidence="5">
    <conflict type="erroneous initiation">
        <sequence resource="EMBL-CDS" id="AAI47258"/>
    </conflict>
    <text>Truncated N-terminus.</text>
</comment>
<comment type="sequence caution" evidence="5">
    <conflict type="erroneous initiation">
        <sequence resource="EMBL-CDS" id="AAI47259"/>
    </conflict>
    <text>Truncated N-terminus.</text>
</comment>
<comment type="sequence caution" evidence="5">
    <conflict type="erroneous initiation">
        <sequence resource="EMBL-CDS" id="BAC27826"/>
    </conflict>
    <text>Truncated N-terminus.</text>
</comment>
<keyword id="KW-0966">Cell projection</keyword>
<keyword id="KW-0175">Coiled coil</keyword>
<keyword id="KW-0524">Neurogenesis</keyword>
<keyword id="KW-1185">Reference proteome</keyword>
<dbReference type="EMBL" id="AL670230">
    <property type="protein sequence ID" value="CAM15767.1"/>
    <property type="molecule type" value="Genomic_DNA"/>
</dbReference>
<dbReference type="EMBL" id="AK032347">
    <property type="protein sequence ID" value="BAC27826.1"/>
    <property type="status" value="ALT_INIT"/>
    <property type="molecule type" value="mRNA"/>
</dbReference>
<dbReference type="EMBL" id="BC147257">
    <property type="protein sequence ID" value="AAI47258.1"/>
    <property type="status" value="ALT_INIT"/>
    <property type="molecule type" value="mRNA"/>
</dbReference>
<dbReference type="EMBL" id="BC147258">
    <property type="protein sequence ID" value="AAI47259.1"/>
    <property type="status" value="ALT_INIT"/>
    <property type="molecule type" value="mRNA"/>
</dbReference>
<dbReference type="CCDS" id="CCDS53067.1"/>
<dbReference type="RefSeq" id="NP_001177261.1">
    <property type="nucleotide sequence ID" value="NM_001190332.2"/>
</dbReference>
<dbReference type="RefSeq" id="XP_006541568.1">
    <property type="nucleotide sequence ID" value="XM_006541505.5"/>
</dbReference>
<dbReference type="RefSeq" id="XP_006541569.1">
    <property type="nucleotide sequence ID" value="XM_006541506.5"/>
</dbReference>
<dbReference type="SMR" id="A2AD83"/>
<dbReference type="FunCoup" id="A2AD83">
    <property type="interactions" value="171"/>
</dbReference>
<dbReference type="STRING" id="10090.ENSMUSP00000057103"/>
<dbReference type="iPTMnet" id="A2AD83"/>
<dbReference type="PhosphoSitePlus" id="A2AD83"/>
<dbReference type="PaxDb" id="10090-ENSMUSP00000057103"/>
<dbReference type="ProteomicsDB" id="271808"/>
<dbReference type="Antibodypedia" id="430">
    <property type="antibodies" value="97 antibodies from 14 providers"/>
</dbReference>
<dbReference type="Ensembl" id="ENSMUST00000060650.7">
    <property type="protein sequence ID" value="ENSMUSP00000057103.6"/>
    <property type="gene ID" value="ENSMUSG00000036131.13"/>
</dbReference>
<dbReference type="GeneID" id="385354"/>
<dbReference type="KEGG" id="mmu:385354"/>
<dbReference type="UCSC" id="uc012hgz.1">
    <property type="organism name" value="mouse"/>
</dbReference>
<dbReference type="AGR" id="MGI:2686379"/>
<dbReference type="CTD" id="90167"/>
<dbReference type="MGI" id="MGI:2686379">
    <property type="gene designation" value="Frmd7"/>
</dbReference>
<dbReference type="VEuPathDB" id="HostDB:ENSMUSG00000036131"/>
<dbReference type="eggNOG" id="KOG3529">
    <property type="taxonomic scope" value="Eukaryota"/>
</dbReference>
<dbReference type="eggNOG" id="KOG3531">
    <property type="taxonomic scope" value="Eukaryota"/>
</dbReference>
<dbReference type="GeneTree" id="ENSGT00940000158972"/>
<dbReference type="HOGENOM" id="CLU_030239_0_0_1"/>
<dbReference type="InParanoid" id="A2AD83"/>
<dbReference type="OMA" id="PYIPCTS"/>
<dbReference type="OrthoDB" id="9990815at2759"/>
<dbReference type="PhylomeDB" id="A2AD83"/>
<dbReference type="TreeFam" id="TF317513"/>
<dbReference type="BioGRID-ORCS" id="385354">
    <property type="hits" value="4 hits in 77 CRISPR screens"/>
</dbReference>
<dbReference type="ChiTaRS" id="Frmd7">
    <property type="organism name" value="mouse"/>
</dbReference>
<dbReference type="PRO" id="PR:A2AD83"/>
<dbReference type="Proteomes" id="UP000000589">
    <property type="component" value="Chromosome X"/>
</dbReference>
<dbReference type="RNAct" id="A2AD83">
    <property type="molecule type" value="protein"/>
</dbReference>
<dbReference type="Bgee" id="ENSMUSG00000036131">
    <property type="expression patterns" value="Expressed in olfactory bulb and 26 other cell types or tissues"/>
</dbReference>
<dbReference type="ExpressionAtlas" id="A2AD83">
    <property type="expression patterns" value="baseline and differential"/>
</dbReference>
<dbReference type="GO" id="GO:0005856">
    <property type="term" value="C:cytoskeleton"/>
    <property type="evidence" value="ECO:0007669"/>
    <property type="project" value="InterPro"/>
</dbReference>
<dbReference type="GO" id="GO:0005829">
    <property type="term" value="C:cytosol"/>
    <property type="evidence" value="ECO:0007669"/>
    <property type="project" value="Ensembl"/>
</dbReference>
<dbReference type="GO" id="GO:0030426">
    <property type="term" value="C:growth cone"/>
    <property type="evidence" value="ECO:0000314"/>
    <property type="project" value="UniProtKB"/>
</dbReference>
<dbReference type="GO" id="GO:0043005">
    <property type="term" value="C:neuron projection"/>
    <property type="evidence" value="ECO:0000314"/>
    <property type="project" value="UniProtKB"/>
</dbReference>
<dbReference type="GO" id="GO:0043025">
    <property type="term" value="C:neuronal cell body"/>
    <property type="evidence" value="ECO:0000314"/>
    <property type="project" value="UniProtKB"/>
</dbReference>
<dbReference type="GO" id="GO:0005654">
    <property type="term" value="C:nucleoplasm"/>
    <property type="evidence" value="ECO:0007669"/>
    <property type="project" value="Ensembl"/>
</dbReference>
<dbReference type="GO" id="GO:0005886">
    <property type="term" value="C:plasma membrane"/>
    <property type="evidence" value="ECO:0007669"/>
    <property type="project" value="Ensembl"/>
</dbReference>
<dbReference type="GO" id="GO:0051497">
    <property type="term" value="P:negative regulation of stress fiber assembly"/>
    <property type="evidence" value="ECO:0000314"/>
    <property type="project" value="MGI"/>
</dbReference>
<dbReference type="GO" id="GO:0007399">
    <property type="term" value="P:nervous system development"/>
    <property type="evidence" value="ECO:0007669"/>
    <property type="project" value="UniProtKB-KW"/>
</dbReference>
<dbReference type="GO" id="GO:0010592">
    <property type="term" value="P:positive regulation of lamellipodium assembly"/>
    <property type="evidence" value="ECO:0000314"/>
    <property type="project" value="MGI"/>
</dbReference>
<dbReference type="GO" id="GO:0051057">
    <property type="term" value="P:positive regulation of small GTPase mediated signal transduction"/>
    <property type="evidence" value="ECO:0000316"/>
    <property type="project" value="MGI"/>
</dbReference>
<dbReference type="GO" id="GO:0010975">
    <property type="term" value="P:regulation of neuron projection development"/>
    <property type="evidence" value="ECO:0000315"/>
    <property type="project" value="UniProtKB"/>
</dbReference>
<dbReference type="CDD" id="cd14473">
    <property type="entry name" value="FERM_B-lobe"/>
    <property type="match status" value="1"/>
</dbReference>
<dbReference type="CDD" id="cd13193">
    <property type="entry name" value="FERM_C_FARP1-like"/>
    <property type="match status" value="1"/>
</dbReference>
<dbReference type="CDD" id="cd17188">
    <property type="entry name" value="FERM_F1_FRMD7"/>
    <property type="match status" value="1"/>
</dbReference>
<dbReference type="FunFam" id="2.30.29.30:FF:000002">
    <property type="entry name" value="Band 4.1-like protein 5 isoform 1"/>
    <property type="match status" value="1"/>
</dbReference>
<dbReference type="FunFam" id="3.10.20.90:FF:000040">
    <property type="entry name" value="FERM, RhoGEF and pleckstrin domain-containing protein"/>
    <property type="match status" value="1"/>
</dbReference>
<dbReference type="FunFam" id="1.20.80.10:FF:000005">
    <property type="entry name" value="FERM, RhoGEF and pleckstrin domain-containing protein 1"/>
    <property type="match status" value="1"/>
</dbReference>
<dbReference type="Gene3D" id="1.20.80.10">
    <property type="match status" value="1"/>
</dbReference>
<dbReference type="Gene3D" id="3.10.20.90">
    <property type="entry name" value="Phosphatidylinositol 3-kinase Catalytic Subunit, Chain A, domain 1"/>
    <property type="match status" value="1"/>
</dbReference>
<dbReference type="Gene3D" id="2.30.29.30">
    <property type="entry name" value="Pleckstrin-homology domain (PH domain)/Phosphotyrosine-binding domain (PTB)"/>
    <property type="match status" value="1"/>
</dbReference>
<dbReference type="InterPro" id="IPR019749">
    <property type="entry name" value="Band_41_domain"/>
</dbReference>
<dbReference type="InterPro" id="IPR014847">
    <property type="entry name" value="FA"/>
</dbReference>
<dbReference type="InterPro" id="IPR041788">
    <property type="entry name" value="FARP1/FARP2/FRMD7_FERM_C"/>
</dbReference>
<dbReference type="InterPro" id="IPR014352">
    <property type="entry name" value="FERM/acyl-CoA-bd_prot_sf"/>
</dbReference>
<dbReference type="InterPro" id="IPR035963">
    <property type="entry name" value="FERM_2"/>
</dbReference>
<dbReference type="InterPro" id="IPR019748">
    <property type="entry name" value="FERM_central"/>
</dbReference>
<dbReference type="InterPro" id="IPR019747">
    <property type="entry name" value="FERM_CS"/>
</dbReference>
<dbReference type="InterPro" id="IPR000299">
    <property type="entry name" value="FERM_domain"/>
</dbReference>
<dbReference type="InterPro" id="IPR018979">
    <property type="entry name" value="FERM_N"/>
</dbReference>
<dbReference type="InterPro" id="IPR018980">
    <property type="entry name" value="FERM_PH-like_C"/>
</dbReference>
<dbReference type="InterPro" id="IPR011993">
    <property type="entry name" value="PH-like_dom_sf"/>
</dbReference>
<dbReference type="InterPro" id="IPR051835">
    <property type="entry name" value="RAC1-GEF"/>
</dbReference>
<dbReference type="InterPro" id="IPR029071">
    <property type="entry name" value="Ubiquitin-like_domsf"/>
</dbReference>
<dbReference type="PANTHER" id="PTHR45858">
    <property type="entry name" value="FERM DOMAIN CONTAINING PROTEIN"/>
    <property type="match status" value="1"/>
</dbReference>
<dbReference type="PANTHER" id="PTHR45858:SF1">
    <property type="entry name" value="FERM DOMAIN-CONTAINING PROTEIN 7"/>
    <property type="match status" value="1"/>
</dbReference>
<dbReference type="Pfam" id="PF08736">
    <property type="entry name" value="FA"/>
    <property type="match status" value="1"/>
</dbReference>
<dbReference type="Pfam" id="PF09380">
    <property type="entry name" value="FERM_C"/>
    <property type="match status" value="1"/>
</dbReference>
<dbReference type="Pfam" id="PF00373">
    <property type="entry name" value="FERM_M"/>
    <property type="match status" value="1"/>
</dbReference>
<dbReference type="Pfam" id="PF09379">
    <property type="entry name" value="FERM_N"/>
    <property type="match status" value="1"/>
</dbReference>
<dbReference type="PRINTS" id="PR00935">
    <property type="entry name" value="BAND41"/>
</dbReference>
<dbReference type="SMART" id="SM00295">
    <property type="entry name" value="B41"/>
    <property type="match status" value="1"/>
</dbReference>
<dbReference type="SMART" id="SM01195">
    <property type="entry name" value="FA"/>
    <property type="match status" value="1"/>
</dbReference>
<dbReference type="SMART" id="SM01196">
    <property type="entry name" value="FERM_C"/>
    <property type="match status" value="1"/>
</dbReference>
<dbReference type="SUPFAM" id="SSF50729">
    <property type="entry name" value="PH domain-like"/>
    <property type="match status" value="1"/>
</dbReference>
<dbReference type="SUPFAM" id="SSF47031">
    <property type="entry name" value="Second domain of FERM"/>
    <property type="match status" value="1"/>
</dbReference>
<dbReference type="SUPFAM" id="SSF54236">
    <property type="entry name" value="Ubiquitin-like"/>
    <property type="match status" value="1"/>
</dbReference>
<dbReference type="PROSITE" id="PS00660">
    <property type="entry name" value="FERM_1"/>
    <property type="match status" value="1"/>
</dbReference>
<dbReference type="PROSITE" id="PS50057">
    <property type="entry name" value="FERM_3"/>
    <property type="match status" value="1"/>
</dbReference>
<protein>
    <recommendedName>
        <fullName>FERM domain-containing protein 7</fullName>
    </recommendedName>
</protein>
<name>FRMD7_MOUSE</name>
<evidence type="ECO:0000250" key="1">
    <source>
        <dbReference type="UniProtKB" id="Q6ZUT3"/>
    </source>
</evidence>
<evidence type="ECO:0000255" key="2"/>
<evidence type="ECO:0000255" key="3">
    <source>
        <dbReference type="PROSITE-ProRule" id="PRU00084"/>
    </source>
</evidence>
<evidence type="ECO:0000269" key="4">
    <source>
    </source>
</evidence>
<evidence type="ECO:0000305" key="5"/>
<evidence type="ECO:0000312" key="6">
    <source>
        <dbReference type="EMBL" id="AAI47258.1"/>
    </source>
</evidence>
<evidence type="ECO:0000312" key="7">
    <source>
        <dbReference type="EMBL" id="BAC27826.1"/>
    </source>
</evidence>
<evidence type="ECO:0000312" key="8">
    <source>
        <dbReference type="EMBL" id="CAM15767.1"/>
    </source>
</evidence>
<evidence type="ECO:0000312" key="9">
    <source>
        <dbReference type="MGI" id="MGI:2686379"/>
    </source>
</evidence>
<proteinExistence type="evidence at protein level"/>
<organism>
    <name type="scientific">Mus musculus</name>
    <name type="common">Mouse</name>
    <dbReference type="NCBI Taxonomy" id="10090"/>
    <lineage>
        <taxon>Eukaryota</taxon>
        <taxon>Metazoa</taxon>
        <taxon>Chordata</taxon>
        <taxon>Craniata</taxon>
        <taxon>Vertebrata</taxon>
        <taxon>Euteleostomi</taxon>
        <taxon>Mammalia</taxon>
        <taxon>Eutheria</taxon>
        <taxon>Euarchontoglires</taxon>
        <taxon>Glires</taxon>
        <taxon>Rodentia</taxon>
        <taxon>Myomorpha</taxon>
        <taxon>Muroidea</taxon>
        <taxon>Muridae</taxon>
        <taxon>Murinae</taxon>
        <taxon>Mus</taxon>
        <taxon>Mus</taxon>
    </lineage>
</organism>
<sequence>MLHLKVQFLDDSQKIFVVDQKSSGKALFNLSCGHLNLAEKEYFGLEFCSHSGNNVWLELLKPITKQVKNPKEVVFKFMVKFFPVDPGHLREELTRYLFTLQIKKDLALGRLPCSDNCTALMVSHILQSELGDFHEETVRKHLVQTQYLPSQASLESKIMQFHQQHIGRSPAESDILLLDIARKLDMYGIRPQPASDGEGMQIHLAVAHMGVLVLRGNTKINTFNWAKIRKLSFKRKHFLIKLHANILVLCKDTLEFTMASRDACKAFWKTCVEYHAFFRLSEEPKSKPKTLLCSKGSSFRYSGRTQRQLLEYGKKGRLKSLPFERKQYPSQYHERQCRSSPDILSDVSKQVEDLRLTYGSSYYRNVNGVHASESMLDSRRRNSAVEVTFAAELEHSKPEAEATSLHPSQSSSSFTFIYADPVFNTDPEPIEFFEERSPLSSFQTTSKFADSHTSKASPARQLTYTDVPYIPCTSQKVDIMPPQVFFYVDKPPQVPRRSLIMAEENMRPDSYVDHSAIKPAKRSPRNMRIKSLQQDLQELQEAMARTSGRSNINVEPEEEDPHLDDAFAYNLQEQTPKRSQSQSDMKTIRFPFGSEFRPLGPCPALTRKTDLFACTFAEQEFPTVLIDQSSAERYVASESSDSESEIIKPDYYFLYGKGTKSPRARIRLSSGSLQLEEEDETISFATPGAEDRTLLKPCNYFLA</sequence>
<gene>
    <name evidence="9" type="primary">Frmd7</name>
</gene>
<feature type="chain" id="PRO_0000391462" description="FERM domain-containing protein 7">
    <location>
        <begin position="1"/>
        <end position="703"/>
    </location>
</feature>
<feature type="domain" description="FERM" evidence="3">
    <location>
        <begin position="2"/>
        <end position="282"/>
    </location>
</feature>
<feature type="coiled-coil region" evidence="2">
    <location>
        <begin position="525"/>
        <end position="552"/>
    </location>
</feature>
<reference evidence="8" key="1">
    <citation type="journal article" date="2009" name="PLoS Biol.">
        <title>Lineage-specific biology revealed by a finished genome assembly of the mouse.</title>
        <authorList>
            <person name="Church D.M."/>
            <person name="Goodstadt L."/>
            <person name="Hillier L.W."/>
            <person name="Zody M.C."/>
            <person name="Goldstein S."/>
            <person name="She X."/>
            <person name="Bult C.J."/>
            <person name="Agarwala R."/>
            <person name="Cherry J.L."/>
            <person name="DiCuccio M."/>
            <person name="Hlavina W."/>
            <person name="Kapustin Y."/>
            <person name="Meric P."/>
            <person name="Maglott D."/>
            <person name="Birtle Z."/>
            <person name="Marques A.C."/>
            <person name="Graves T."/>
            <person name="Zhou S."/>
            <person name="Teague B."/>
            <person name="Potamousis K."/>
            <person name="Churas C."/>
            <person name="Place M."/>
            <person name="Herschleb J."/>
            <person name="Runnheim R."/>
            <person name="Forrest D."/>
            <person name="Amos-Landgraf J."/>
            <person name="Schwartz D.C."/>
            <person name="Cheng Z."/>
            <person name="Lindblad-Toh K."/>
            <person name="Eichler E.E."/>
            <person name="Ponting C.P."/>
        </authorList>
    </citation>
    <scope>NUCLEOTIDE SEQUENCE [LARGE SCALE GENOMIC DNA]</scope>
    <source>
        <strain>C57BL/6J</strain>
    </source>
</reference>
<reference evidence="5 7" key="2">
    <citation type="journal article" date="2005" name="Science">
        <title>The transcriptional landscape of the mammalian genome.</title>
        <authorList>
            <person name="Carninci P."/>
            <person name="Kasukawa T."/>
            <person name="Katayama S."/>
            <person name="Gough J."/>
            <person name="Frith M.C."/>
            <person name="Maeda N."/>
            <person name="Oyama R."/>
            <person name="Ravasi T."/>
            <person name="Lenhard B."/>
            <person name="Wells C."/>
            <person name="Kodzius R."/>
            <person name="Shimokawa K."/>
            <person name="Bajic V.B."/>
            <person name="Brenner S.E."/>
            <person name="Batalov S."/>
            <person name="Forrest A.R."/>
            <person name="Zavolan M."/>
            <person name="Davis M.J."/>
            <person name="Wilming L.G."/>
            <person name="Aidinis V."/>
            <person name="Allen J.E."/>
            <person name="Ambesi-Impiombato A."/>
            <person name="Apweiler R."/>
            <person name="Aturaliya R.N."/>
            <person name="Bailey T.L."/>
            <person name="Bansal M."/>
            <person name="Baxter L."/>
            <person name="Beisel K.W."/>
            <person name="Bersano T."/>
            <person name="Bono H."/>
            <person name="Chalk A.M."/>
            <person name="Chiu K.P."/>
            <person name="Choudhary V."/>
            <person name="Christoffels A."/>
            <person name="Clutterbuck D.R."/>
            <person name="Crowe M.L."/>
            <person name="Dalla E."/>
            <person name="Dalrymple B.P."/>
            <person name="de Bono B."/>
            <person name="Della Gatta G."/>
            <person name="di Bernardo D."/>
            <person name="Down T."/>
            <person name="Engstrom P."/>
            <person name="Fagiolini M."/>
            <person name="Faulkner G."/>
            <person name="Fletcher C.F."/>
            <person name="Fukushima T."/>
            <person name="Furuno M."/>
            <person name="Futaki S."/>
            <person name="Gariboldi M."/>
            <person name="Georgii-Hemming P."/>
            <person name="Gingeras T.R."/>
            <person name="Gojobori T."/>
            <person name="Green R.E."/>
            <person name="Gustincich S."/>
            <person name="Harbers M."/>
            <person name="Hayashi Y."/>
            <person name="Hensch T.K."/>
            <person name="Hirokawa N."/>
            <person name="Hill D."/>
            <person name="Huminiecki L."/>
            <person name="Iacono M."/>
            <person name="Ikeo K."/>
            <person name="Iwama A."/>
            <person name="Ishikawa T."/>
            <person name="Jakt M."/>
            <person name="Kanapin A."/>
            <person name="Katoh M."/>
            <person name="Kawasawa Y."/>
            <person name="Kelso J."/>
            <person name="Kitamura H."/>
            <person name="Kitano H."/>
            <person name="Kollias G."/>
            <person name="Krishnan S.P."/>
            <person name="Kruger A."/>
            <person name="Kummerfeld S.K."/>
            <person name="Kurochkin I.V."/>
            <person name="Lareau L.F."/>
            <person name="Lazarevic D."/>
            <person name="Lipovich L."/>
            <person name="Liu J."/>
            <person name="Liuni S."/>
            <person name="McWilliam S."/>
            <person name="Madan Babu M."/>
            <person name="Madera M."/>
            <person name="Marchionni L."/>
            <person name="Matsuda H."/>
            <person name="Matsuzawa S."/>
            <person name="Miki H."/>
            <person name="Mignone F."/>
            <person name="Miyake S."/>
            <person name="Morris K."/>
            <person name="Mottagui-Tabar S."/>
            <person name="Mulder N."/>
            <person name="Nakano N."/>
            <person name="Nakauchi H."/>
            <person name="Ng P."/>
            <person name="Nilsson R."/>
            <person name="Nishiguchi S."/>
            <person name="Nishikawa S."/>
            <person name="Nori F."/>
            <person name="Ohara O."/>
            <person name="Okazaki Y."/>
            <person name="Orlando V."/>
            <person name="Pang K.C."/>
            <person name="Pavan W.J."/>
            <person name="Pavesi G."/>
            <person name="Pesole G."/>
            <person name="Petrovsky N."/>
            <person name="Piazza S."/>
            <person name="Reed J."/>
            <person name="Reid J.F."/>
            <person name="Ring B.Z."/>
            <person name="Ringwald M."/>
            <person name="Rost B."/>
            <person name="Ruan Y."/>
            <person name="Salzberg S.L."/>
            <person name="Sandelin A."/>
            <person name="Schneider C."/>
            <person name="Schoenbach C."/>
            <person name="Sekiguchi K."/>
            <person name="Semple C.A."/>
            <person name="Seno S."/>
            <person name="Sessa L."/>
            <person name="Sheng Y."/>
            <person name="Shibata Y."/>
            <person name="Shimada H."/>
            <person name="Shimada K."/>
            <person name="Silva D."/>
            <person name="Sinclair B."/>
            <person name="Sperling S."/>
            <person name="Stupka E."/>
            <person name="Sugiura K."/>
            <person name="Sultana R."/>
            <person name="Takenaka Y."/>
            <person name="Taki K."/>
            <person name="Tammoja K."/>
            <person name="Tan S.L."/>
            <person name="Tang S."/>
            <person name="Taylor M.S."/>
            <person name="Tegner J."/>
            <person name="Teichmann S.A."/>
            <person name="Ueda H.R."/>
            <person name="van Nimwegen E."/>
            <person name="Verardo R."/>
            <person name="Wei C.L."/>
            <person name="Yagi K."/>
            <person name="Yamanishi H."/>
            <person name="Zabarovsky E."/>
            <person name="Zhu S."/>
            <person name="Zimmer A."/>
            <person name="Hide W."/>
            <person name="Bult C."/>
            <person name="Grimmond S.M."/>
            <person name="Teasdale R.D."/>
            <person name="Liu E.T."/>
            <person name="Brusic V."/>
            <person name="Quackenbush J."/>
            <person name="Wahlestedt C."/>
            <person name="Mattick J.S."/>
            <person name="Hume D.A."/>
            <person name="Kai C."/>
            <person name="Sasaki D."/>
            <person name="Tomaru Y."/>
            <person name="Fukuda S."/>
            <person name="Kanamori-Katayama M."/>
            <person name="Suzuki M."/>
            <person name="Aoki J."/>
            <person name="Arakawa T."/>
            <person name="Iida J."/>
            <person name="Imamura K."/>
            <person name="Itoh M."/>
            <person name="Kato T."/>
            <person name="Kawaji H."/>
            <person name="Kawagashira N."/>
            <person name="Kawashima T."/>
            <person name="Kojima M."/>
            <person name="Kondo S."/>
            <person name="Konno H."/>
            <person name="Nakano K."/>
            <person name="Ninomiya N."/>
            <person name="Nishio T."/>
            <person name="Okada M."/>
            <person name="Plessy C."/>
            <person name="Shibata K."/>
            <person name="Shiraki T."/>
            <person name="Suzuki S."/>
            <person name="Tagami M."/>
            <person name="Waki K."/>
            <person name="Watahiki A."/>
            <person name="Okamura-Oho Y."/>
            <person name="Suzuki H."/>
            <person name="Kawai J."/>
            <person name="Hayashizaki Y."/>
        </authorList>
    </citation>
    <scope>NUCLEOTIDE SEQUENCE [LARGE SCALE MRNA] OF 558-703</scope>
    <source>
        <strain evidence="7">C57BL/6J</strain>
        <tissue evidence="7">Olfactory bulb</tissue>
    </source>
</reference>
<reference evidence="5 6" key="3">
    <citation type="journal article" date="2004" name="Genome Res.">
        <title>The status, quality, and expansion of the NIH full-length cDNA project: the Mammalian Gene Collection (MGC).</title>
        <authorList>
            <consortium name="The MGC Project Team"/>
        </authorList>
    </citation>
    <scope>NUCLEOTIDE SEQUENCE [LARGE SCALE MRNA] OF 576-703</scope>
    <source>
        <tissue evidence="6">Brain</tissue>
    </source>
</reference>
<reference evidence="5" key="4">
    <citation type="journal article" date="2010" name="Hum. Mol. Genet.">
        <title>The nystagmus-associated FRMD7 gene regulates neuronal outgrowth and development.</title>
        <authorList>
            <person name="Betts-Henderson J."/>
            <person name="Bartesaghi S."/>
            <person name="Crosier M."/>
            <person name="Lindsay S."/>
            <person name="Chen H.L."/>
            <person name="Salomoni P."/>
            <person name="Gottlob I."/>
            <person name="Nicotera P."/>
        </authorList>
    </citation>
    <scope>FUNCTION</scope>
    <scope>SUBCELLULAR LOCATION</scope>
    <scope>TISSUE SPECIFICITY</scope>
    <scope>INDUCTION</scope>
</reference>
<accession>A2AD83</accession>
<accession>Q8CCP8</accession>